<accession>Q9ERH4</accession>
<accession>Q8C2L8</accession>
<accession>Q8C989</accession>
<accession>Q921Z0</accession>
<proteinExistence type="evidence at protein level"/>
<sequence>MTVPSAEELDSFKYSDLQNLAKRLGLRANMKADKLLKALKAHLNPETRKENKNQDENQFSTDETEIHVSSEEQAETESGGHVTKTRRRRRKKHKTIHGIPTSQTLLQDHLEMKGTDSSNFQNQENQENQDPRDTAEVPSLPEQRPEDGNAASSGEGEVNDIKDSKKPLEKRSLCTDEFSKLGNNKRTSATTPNFKKLHEARFKKMESIDEYIMRKKKHLKEHSSLNELKLDKKGIVTPVPPRGRLSVPCTPARQQCPQGHSATKMNVRFSAATKDNEHKCSLTKTPARKSPHVTAPGSASKGQAVFRTPKSKATERTSIAVITPFKLMTEATQTPSSSKKPVFDLKASLSRPLNYKPHKGKLKPWGQAKENNSLNERVSRVTFHRKTYKQPHLQTREERWKRQEQERKEKKEKLLEARRNLGVTKAQ</sequence>
<protein>
    <recommendedName>
        <fullName>Nucleolar and spindle-associated protein 1</fullName>
        <shortName>NuSAP</shortName>
    </recommendedName>
</protein>
<name>NUSAP_MOUSE</name>
<comment type="function">
    <text evidence="5 7">Microtubule-associated protein with the capacity to bundle and stabilize microtubules. May associate with chromosomes and promote the organization of mitotic spindle microtubules around them.</text>
</comment>
<comment type="subunit">
    <text>Interacts with DNA and microtubules. Microtubule bundling is inhibited by IPO7, KPNA2 and KPNB1 while association with DNA is also inhibited by IPO7 and KPNA2.</text>
</comment>
<comment type="subcellular location">
    <subcellularLocation>
        <location>Cytoplasm</location>
    </subcellularLocation>
    <subcellularLocation>
        <location>Nucleus</location>
        <location>Nucleolus</location>
    </subcellularLocation>
    <subcellularLocation>
        <location>Cytoplasm</location>
        <location>Cytoskeleton</location>
        <location>Spindle</location>
    </subcellularLocation>
    <subcellularLocation>
        <location>Chromosome</location>
    </subcellularLocation>
    <text>Found in the cytoplasm and nucleolus during interphase and redistributes to the mitotic spindle in prometaphase. Localizes to the mitotic spindle and to the chromosomes during anaphase and telophase then disappears from around the chromosomes during cytokinesis.</text>
</comment>
<comment type="alternative products">
    <event type="alternative splicing"/>
    <isoform>
        <id>Q9ERH4-1</id>
        <name>1</name>
        <sequence type="displayed"/>
    </isoform>
    <isoform>
        <id>Q9ERH4-2</id>
        <name>2</name>
        <sequence type="described" ref="VSP_027913"/>
    </isoform>
</comment>
<comment type="developmental stage">
    <text evidence="5 6">Expression peaks at G2/M phase and is low in G1 phase. Expressed at higher levels in immature erythroblasts relative to mature erythroblasts.</text>
</comment>
<comment type="domain">
    <text evidence="1">The KEN box is required for the FZR1-dependent degradation of this protein subsequent to ubiquitination.</text>
</comment>
<comment type="PTM">
    <text evidence="1">Ubiquitinated. Ubiquitination by FZR1 may lead to proteasome-dependent degradation of this protein (By similarity).</text>
</comment>
<comment type="similarity">
    <text evidence="9">Belongs to the NUSAP family.</text>
</comment>
<gene>
    <name type="primary">Nusap1</name>
</gene>
<evidence type="ECO:0000250" key="1"/>
<evidence type="ECO:0000250" key="2">
    <source>
        <dbReference type="UniProtKB" id="Q9BXS6"/>
    </source>
</evidence>
<evidence type="ECO:0000255" key="3"/>
<evidence type="ECO:0000256" key="4">
    <source>
        <dbReference type="SAM" id="MobiDB-lite"/>
    </source>
</evidence>
<evidence type="ECO:0000269" key="5">
    <source>
    </source>
</evidence>
<evidence type="ECO:0000269" key="6">
    <source>
    </source>
</evidence>
<evidence type="ECO:0000269" key="7">
    <source>
    </source>
</evidence>
<evidence type="ECO:0000303" key="8">
    <source>
    </source>
</evidence>
<evidence type="ECO:0000305" key="9"/>
<keyword id="KW-0025">Alternative splicing</keyword>
<keyword id="KW-0131">Cell cycle</keyword>
<keyword id="KW-0132">Cell division</keyword>
<keyword id="KW-0158">Chromosome</keyword>
<keyword id="KW-0175">Coiled coil</keyword>
<keyword id="KW-0963">Cytoplasm</keyword>
<keyword id="KW-0206">Cytoskeleton</keyword>
<keyword id="KW-0238">DNA-binding</keyword>
<keyword id="KW-0493">Microtubule</keyword>
<keyword id="KW-0498">Mitosis</keyword>
<keyword id="KW-0539">Nucleus</keyword>
<keyword id="KW-0597">Phosphoprotein</keyword>
<keyword id="KW-1185">Reference proteome</keyword>
<keyword id="KW-0832">Ubl conjugation</keyword>
<organism>
    <name type="scientific">Mus musculus</name>
    <name type="common">Mouse</name>
    <dbReference type="NCBI Taxonomy" id="10090"/>
    <lineage>
        <taxon>Eukaryota</taxon>
        <taxon>Metazoa</taxon>
        <taxon>Chordata</taxon>
        <taxon>Craniata</taxon>
        <taxon>Vertebrata</taxon>
        <taxon>Euteleostomi</taxon>
        <taxon>Mammalia</taxon>
        <taxon>Eutheria</taxon>
        <taxon>Euarchontoglires</taxon>
        <taxon>Glires</taxon>
        <taxon>Rodentia</taxon>
        <taxon>Myomorpha</taxon>
        <taxon>Muroidea</taxon>
        <taxon>Muridae</taxon>
        <taxon>Murinae</taxon>
        <taxon>Mus</taxon>
        <taxon>Mus</taxon>
    </lineage>
</organism>
<feature type="chain" id="PRO_0000302035" description="Nucleolar and spindle-associated protein 1">
    <location>
        <begin position="1"/>
        <end position="427"/>
    </location>
</feature>
<feature type="region of interest" description="Disordered" evidence="4">
    <location>
        <begin position="41"/>
        <end position="190"/>
    </location>
</feature>
<feature type="region of interest" description="Disordered" evidence="4">
    <location>
        <begin position="235"/>
        <end position="312"/>
    </location>
</feature>
<feature type="region of interest" description="Interaction with microtubules">
    <location>
        <begin position="243"/>
        <end position="367"/>
    </location>
</feature>
<feature type="region of interest" description="Disordered" evidence="4">
    <location>
        <begin position="354"/>
        <end position="427"/>
    </location>
</feature>
<feature type="coiled-coil region" evidence="3">
    <location>
        <begin position="393"/>
        <end position="425"/>
    </location>
</feature>
<feature type="short sequence motif" description="KEN box" evidence="1">
    <location>
        <begin position="369"/>
        <end position="375"/>
    </location>
</feature>
<feature type="compositionally biased region" description="Basic and acidic residues" evidence="4">
    <location>
        <begin position="43"/>
        <end position="55"/>
    </location>
</feature>
<feature type="compositionally biased region" description="Basic residues" evidence="4">
    <location>
        <begin position="83"/>
        <end position="96"/>
    </location>
</feature>
<feature type="compositionally biased region" description="Low complexity" evidence="4">
    <location>
        <begin position="119"/>
        <end position="128"/>
    </location>
</feature>
<feature type="compositionally biased region" description="Basic and acidic residues" evidence="4">
    <location>
        <begin position="159"/>
        <end position="179"/>
    </location>
</feature>
<feature type="compositionally biased region" description="Polar residues" evidence="4">
    <location>
        <begin position="181"/>
        <end position="190"/>
    </location>
</feature>
<feature type="compositionally biased region" description="Polar residues" evidence="4">
    <location>
        <begin position="252"/>
        <end position="264"/>
    </location>
</feature>
<feature type="compositionally biased region" description="Basic and acidic residues" evidence="4">
    <location>
        <begin position="394"/>
        <end position="419"/>
    </location>
</feature>
<feature type="modified residue" description="Phosphoserine" evidence="2">
    <location>
        <position position="139"/>
    </location>
</feature>
<feature type="modified residue" description="Phosphothreonine" evidence="2">
    <location>
        <position position="191"/>
    </location>
</feature>
<feature type="modified residue" description="Phosphoserine" evidence="2">
    <location>
        <position position="246"/>
    </location>
</feature>
<feature type="modified residue" description="Phosphothreonine" evidence="2">
    <location>
        <position position="250"/>
    </location>
</feature>
<feature type="modified residue" description="Phosphoserine" evidence="2">
    <location>
        <position position="261"/>
    </location>
</feature>
<feature type="modified residue" description="Phosphothreonine" evidence="2">
    <location>
        <position position="323"/>
    </location>
</feature>
<feature type="modified residue" description="Phosphothreonine" evidence="2">
    <location>
        <position position="334"/>
    </location>
</feature>
<feature type="modified residue" description="Phosphoserine" evidence="2">
    <location>
        <position position="337"/>
    </location>
</feature>
<feature type="modified residue" description="Phosphoserine" evidence="2">
    <location>
        <position position="348"/>
    </location>
</feature>
<feature type="splice variant" id="VSP_027913" description="In isoform 2." evidence="8">
    <location>
        <begin position="161"/>
        <end position="193"/>
    </location>
</feature>
<feature type="sequence conflict" description="In Ref. 2; BAC40322." evidence="9" ref="2">
    <original>T</original>
    <variation>TEIHVSSEEQA</variation>
    <location>
        <position position="64"/>
    </location>
</feature>
<feature type="sequence conflict" description="In Ref. 2; BAC40322." evidence="9" ref="2">
    <original>K</original>
    <variation>R</variation>
    <location>
        <position position="91"/>
    </location>
</feature>
<feature type="sequence conflict" description="In Ref. 2; BAC40322." evidence="9" ref="2">
    <original>T</original>
    <variation>N</variation>
    <location>
        <position position="104"/>
    </location>
</feature>
<feature type="sequence conflict" description="In Ref. 2; BAC40322 and 4; AAH09096." evidence="9" ref="2 4">
    <original>R</original>
    <variation>H</variation>
    <location>
        <position position="201"/>
    </location>
</feature>
<feature type="sequence conflict" description="In Ref. 4; AAH09096." evidence="9" ref="4">
    <original>A</original>
    <variation>P</variation>
    <location>
        <position position="331"/>
    </location>
</feature>
<reference key="1">
    <citation type="submission" date="2000-09" db="EMBL/GenBank/DDBJ databases">
        <title>A novel nucleolar protein expressed in proliferating cells.</title>
        <authorList>
            <person name="Sato H."/>
            <person name="Tanaka Y."/>
            <person name="Taniguchi M."/>
        </authorList>
    </citation>
    <scope>NUCLEOTIDE SEQUENCE [MRNA] (ISOFORM 1)</scope>
    <source>
        <strain>C57BL/6J</strain>
        <tissue>Liver</tissue>
    </source>
</reference>
<reference key="2">
    <citation type="journal article" date="2005" name="Science">
        <title>The transcriptional landscape of the mammalian genome.</title>
        <authorList>
            <person name="Carninci P."/>
            <person name="Kasukawa T."/>
            <person name="Katayama S."/>
            <person name="Gough J."/>
            <person name="Frith M.C."/>
            <person name="Maeda N."/>
            <person name="Oyama R."/>
            <person name="Ravasi T."/>
            <person name="Lenhard B."/>
            <person name="Wells C."/>
            <person name="Kodzius R."/>
            <person name="Shimokawa K."/>
            <person name="Bajic V.B."/>
            <person name="Brenner S.E."/>
            <person name="Batalov S."/>
            <person name="Forrest A.R."/>
            <person name="Zavolan M."/>
            <person name="Davis M.J."/>
            <person name="Wilming L.G."/>
            <person name="Aidinis V."/>
            <person name="Allen J.E."/>
            <person name="Ambesi-Impiombato A."/>
            <person name="Apweiler R."/>
            <person name="Aturaliya R.N."/>
            <person name="Bailey T.L."/>
            <person name="Bansal M."/>
            <person name="Baxter L."/>
            <person name="Beisel K.W."/>
            <person name="Bersano T."/>
            <person name="Bono H."/>
            <person name="Chalk A.M."/>
            <person name="Chiu K.P."/>
            <person name="Choudhary V."/>
            <person name="Christoffels A."/>
            <person name="Clutterbuck D.R."/>
            <person name="Crowe M.L."/>
            <person name="Dalla E."/>
            <person name="Dalrymple B.P."/>
            <person name="de Bono B."/>
            <person name="Della Gatta G."/>
            <person name="di Bernardo D."/>
            <person name="Down T."/>
            <person name="Engstrom P."/>
            <person name="Fagiolini M."/>
            <person name="Faulkner G."/>
            <person name="Fletcher C.F."/>
            <person name="Fukushima T."/>
            <person name="Furuno M."/>
            <person name="Futaki S."/>
            <person name="Gariboldi M."/>
            <person name="Georgii-Hemming P."/>
            <person name="Gingeras T.R."/>
            <person name="Gojobori T."/>
            <person name="Green R.E."/>
            <person name="Gustincich S."/>
            <person name="Harbers M."/>
            <person name="Hayashi Y."/>
            <person name="Hensch T.K."/>
            <person name="Hirokawa N."/>
            <person name="Hill D."/>
            <person name="Huminiecki L."/>
            <person name="Iacono M."/>
            <person name="Ikeo K."/>
            <person name="Iwama A."/>
            <person name="Ishikawa T."/>
            <person name="Jakt M."/>
            <person name="Kanapin A."/>
            <person name="Katoh M."/>
            <person name="Kawasawa Y."/>
            <person name="Kelso J."/>
            <person name="Kitamura H."/>
            <person name="Kitano H."/>
            <person name="Kollias G."/>
            <person name="Krishnan S.P."/>
            <person name="Kruger A."/>
            <person name="Kummerfeld S.K."/>
            <person name="Kurochkin I.V."/>
            <person name="Lareau L.F."/>
            <person name="Lazarevic D."/>
            <person name="Lipovich L."/>
            <person name="Liu J."/>
            <person name="Liuni S."/>
            <person name="McWilliam S."/>
            <person name="Madan Babu M."/>
            <person name="Madera M."/>
            <person name="Marchionni L."/>
            <person name="Matsuda H."/>
            <person name="Matsuzawa S."/>
            <person name="Miki H."/>
            <person name="Mignone F."/>
            <person name="Miyake S."/>
            <person name="Morris K."/>
            <person name="Mottagui-Tabar S."/>
            <person name="Mulder N."/>
            <person name="Nakano N."/>
            <person name="Nakauchi H."/>
            <person name="Ng P."/>
            <person name="Nilsson R."/>
            <person name="Nishiguchi S."/>
            <person name="Nishikawa S."/>
            <person name="Nori F."/>
            <person name="Ohara O."/>
            <person name="Okazaki Y."/>
            <person name="Orlando V."/>
            <person name="Pang K.C."/>
            <person name="Pavan W.J."/>
            <person name="Pavesi G."/>
            <person name="Pesole G."/>
            <person name="Petrovsky N."/>
            <person name="Piazza S."/>
            <person name="Reed J."/>
            <person name="Reid J.F."/>
            <person name="Ring B.Z."/>
            <person name="Ringwald M."/>
            <person name="Rost B."/>
            <person name="Ruan Y."/>
            <person name="Salzberg S.L."/>
            <person name="Sandelin A."/>
            <person name="Schneider C."/>
            <person name="Schoenbach C."/>
            <person name="Sekiguchi K."/>
            <person name="Semple C.A."/>
            <person name="Seno S."/>
            <person name="Sessa L."/>
            <person name="Sheng Y."/>
            <person name="Shibata Y."/>
            <person name="Shimada H."/>
            <person name="Shimada K."/>
            <person name="Silva D."/>
            <person name="Sinclair B."/>
            <person name="Sperling S."/>
            <person name="Stupka E."/>
            <person name="Sugiura K."/>
            <person name="Sultana R."/>
            <person name="Takenaka Y."/>
            <person name="Taki K."/>
            <person name="Tammoja K."/>
            <person name="Tan S.L."/>
            <person name="Tang S."/>
            <person name="Taylor M.S."/>
            <person name="Tegner J."/>
            <person name="Teichmann S.A."/>
            <person name="Ueda H.R."/>
            <person name="van Nimwegen E."/>
            <person name="Verardo R."/>
            <person name="Wei C.L."/>
            <person name="Yagi K."/>
            <person name="Yamanishi H."/>
            <person name="Zabarovsky E."/>
            <person name="Zhu S."/>
            <person name="Zimmer A."/>
            <person name="Hide W."/>
            <person name="Bult C."/>
            <person name="Grimmond S.M."/>
            <person name="Teasdale R.D."/>
            <person name="Liu E.T."/>
            <person name="Brusic V."/>
            <person name="Quackenbush J."/>
            <person name="Wahlestedt C."/>
            <person name="Mattick J.S."/>
            <person name="Hume D.A."/>
            <person name="Kai C."/>
            <person name="Sasaki D."/>
            <person name="Tomaru Y."/>
            <person name="Fukuda S."/>
            <person name="Kanamori-Katayama M."/>
            <person name="Suzuki M."/>
            <person name="Aoki J."/>
            <person name="Arakawa T."/>
            <person name="Iida J."/>
            <person name="Imamura K."/>
            <person name="Itoh M."/>
            <person name="Kato T."/>
            <person name="Kawaji H."/>
            <person name="Kawagashira N."/>
            <person name="Kawashima T."/>
            <person name="Kojima M."/>
            <person name="Kondo S."/>
            <person name="Konno H."/>
            <person name="Nakano K."/>
            <person name="Ninomiya N."/>
            <person name="Nishio T."/>
            <person name="Okada M."/>
            <person name="Plessy C."/>
            <person name="Shibata K."/>
            <person name="Shiraki T."/>
            <person name="Suzuki S."/>
            <person name="Tagami M."/>
            <person name="Waki K."/>
            <person name="Watahiki A."/>
            <person name="Okamura-Oho Y."/>
            <person name="Suzuki H."/>
            <person name="Kawai J."/>
            <person name="Hayashizaki Y."/>
        </authorList>
    </citation>
    <scope>NUCLEOTIDE SEQUENCE [LARGE SCALE MRNA] (ISOFORMS 1 AND 2)</scope>
    <source>
        <strain>C57BL/6J</strain>
        <strain>NOD</strain>
        <tissue>Cerebellum</tissue>
        <tissue>Embryo</tissue>
        <tissue>Thymus</tissue>
    </source>
</reference>
<reference key="3">
    <citation type="journal article" date="2009" name="PLoS Biol.">
        <title>Lineage-specific biology revealed by a finished genome assembly of the mouse.</title>
        <authorList>
            <person name="Church D.M."/>
            <person name="Goodstadt L."/>
            <person name="Hillier L.W."/>
            <person name="Zody M.C."/>
            <person name="Goldstein S."/>
            <person name="She X."/>
            <person name="Bult C.J."/>
            <person name="Agarwala R."/>
            <person name="Cherry J.L."/>
            <person name="DiCuccio M."/>
            <person name="Hlavina W."/>
            <person name="Kapustin Y."/>
            <person name="Meric P."/>
            <person name="Maglott D."/>
            <person name="Birtle Z."/>
            <person name="Marques A.C."/>
            <person name="Graves T."/>
            <person name="Zhou S."/>
            <person name="Teague B."/>
            <person name="Potamousis K."/>
            <person name="Churas C."/>
            <person name="Place M."/>
            <person name="Herschleb J."/>
            <person name="Runnheim R."/>
            <person name="Forrest D."/>
            <person name="Amos-Landgraf J."/>
            <person name="Schwartz D.C."/>
            <person name="Cheng Z."/>
            <person name="Lindblad-Toh K."/>
            <person name="Eichler E.E."/>
            <person name="Ponting C.P."/>
        </authorList>
    </citation>
    <scope>NUCLEOTIDE SEQUENCE [LARGE SCALE GENOMIC DNA]</scope>
    <source>
        <strain>C57BL/6J</strain>
    </source>
</reference>
<reference key="4">
    <citation type="journal article" date="2004" name="Genome Res.">
        <title>The status, quality, and expansion of the NIH full-length cDNA project: the Mammalian Gene Collection (MGC).</title>
        <authorList>
            <consortium name="The MGC Project Team"/>
        </authorList>
    </citation>
    <scope>NUCLEOTIDE SEQUENCE [LARGE SCALE MRNA] (ISOFORM 1)</scope>
    <source>
        <strain>C57BL/6J</strain>
        <strain>Czech II</strain>
        <strain>FVB/N</strain>
        <tissue>Embryonic germ cell</tissue>
        <tissue>Mammary tumor</tissue>
    </source>
</reference>
<reference key="5">
    <citation type="journal article" date="2003" name="J. Cell Biol.">
        <title>NuSAP, a novel microtubule-associated protein involved in mitotic spindle organization.</title>
        <authorList>
            <person name="Raemaekers T."/>
            <person name="Ribbeck K."/>
            <person name="Beaudouin J."/>
            <person name="Annaert W."/>
            <person name="Van Camp M."/>
            <person name="Stockmans I."/>
            <person name="Smets N."/>
            <person name="Bouillon R."/>
            <person name="Ellenberg J."/>
            <person name="Carmeliet G."/>
        </authorList>
    </citation>
    <scope>FUNCTION</scope>
    <scope>ASSOCIATION WITH MICROTUBULES</scope>
    <scope>SUBCELLULAR LOCATION</scope>
    <scope>DEVELOPMENTAL STAGE</scope>
</reference>
<reference key="6">
    <citation type="journal article" date="2006" name="Br. J. Haematol.">
        <title>Expression analyses and transcriptional regulation of mouse nucleolar spindle-associated protein gene in erythroid cells: essential role of NF-Y.</title>
        <authorList>
            <person name="Fujiwara T."/>
            <person name="Harigae H."/>
            <person name="Okitsu Y."/>
            <person name="Takahashi S."/>
            <person name="Yokoyama H."/>
            <person name="Yamada M.F."/>
            <person name="Ishizawa K."/>
            <person name="Kameoka J."/>
            <person name="Kaku M."/>
            <person name="Sasaki T."/>
        </authorList>
    </citation>
    <scope>DEVELOPMENTAL STAGE</scope>
</reference>
<reference key="7">
    <citation type="journal article" date="2007" name="Curr. Biol.">
        <title>A role for NuSAP in linking microtubules to mitotic chromosomes.</title>
        <authorList>
            <person name="Ribbeck K."/>
            <person name="Raemaekers T."/>
            <person name="Carmeliet G."/>
            <person name="Mattaj I.W."/>
        </authorList>
    </citation>
    <scope>FUNCTION</scope>
    <scope>DNA-BINDING</scope>
    <scope>SUBCELLULAR LOCATION</scope>
</reference>
<reference key="8">
    <citation type="journal article" date="2010" name="Cell">
        <title>A tissue-specific atlas of mouse protein phosphorylation and expression.</title>
        <authorList>
            <person name="Huttlin E.L."/>
            <person name="Jedrychowski M.P."/>
            <person name="Elias J.E."/>
            <person name="Goswami T."/>
            <person name="Rad R."/>
            <person name="Beausoleil S.A."/>
            <person name="Villen J."/>
            <person name="Haas W."/>
            <person name="Sowa M.E."/>
            <person name="Gygi S.P."/>
        </authorList>
    </citation>
    <scope>IDENTIFICATION BY MASS SPECTROMETRY [LARGE SCALE ANALYSIS]</scope>
    <source>
        <tissue>Spleen</tissue>
    </source>
</reference>
<dbReference type="EMBL" id="AF305710">
    <property type="protein sequence ID" value="AAG31285.1"/>
    <property type="molecule type" value="mRNA"/>
</dbReference>
<dbReference type="EMBL" id="AK042697">
    <property type="protein sequence ID" value="BAC31337.1"/>
    <property type="molecule type" value="mRNA"/>
</dbReference>
<dbReference type="EMBL" id="AK076028">
    <property type="protein sequence ID" value="BAC36131.1"/>
    <property type="molecule type" value="mRNA"/>
</dbReference>
<dbReference type="EMBL" id="AK088389">
    <property type="protein sequence ID" value="BAC40322.1"/>
    <property type="molecule type" value="mRNA"/>
</dbReference>
<dbReference type="EMBL" id="AL844536">
    <property type="status" value="NOT_ANNOTATED_CDS"/>
    <property type="molecule type" value="Genomic_DNA"/>
</dbReference>
<dbReference type="EMBL" id="BC004787">
    <property type="protein sequence ID" value="AAH04787.1"/>
    <property type="molecule type" value="mRNA"/>
</dbReference>
<dbReference type="EMBL" id="BC009096">
    <property type="protein sequence ID" value="AAH09096.1"/>
    <property type="molecule type" value="mRNA"/>
</dbReference>
<dbReference type="EMBL" id="BC100392">
    <property type="protein sequence ID" value="AAI00393.1"/>
    <property type="molecule type" value="mRNA"/>
</dbReference>
<dbReference type="CCDS" id="CCDS16605.1">
    <molecule id="Q9ERH4-1"/>
</dbReference>
<dbReference type="CCDS" id="CCDS38206.1">
    <molecule id="Q9ERH4-2"/>
</dbReference>
<dbReference type="RefSeq" id="NP_001036117.1">
    <molecule id="Q9ERH4-2"/>
    <property type="nucleotide sequence ID" value="NM_001042652.2"/>
</dbReference>
<dbReference type="RefSeq" id="NP_598612.1">
    <molecule id="Q9ERH4-1"/>
    <property type="nucleotide sequence ID" value="NM_133851.4"/>
</dbReference>
<dbReference type="SMR" id="Q9ERH4"/>
<dbReference type="BioGRID" id="224465">
    <property type="interactions" value="2"/>
</dbReference>
<dbReference type="FunCoup" id="Q9ERH4">
    <property type="interactions" value="1033"/>
</dbReference>
<dbReference type="STRING" id="10090.ENSMUSP00000068713"/>
<dbReference type="iPTMnet" id="Q9ERH4"/>
<dbReference type="PhosphoSitePlus" id="Q9ERH4"/>
<dbReference type="jPOST" id="Q9ERH4"/>
<dbReference type="PaxDb" id="10090-ENSMUSP00000068713"/>
<dbReference type="PeptideAtlas" id="Q9ERH4"/>
<dbReference type="ProteomicsDB" id="293784">
    <molecule id="Q9ERH4-1"/>
</dbReference>
<dbReference type="ProteomicsDB" id="293785">
    <molecule id="Q9ERH4-2"/>
</dbReference>
<dbReference type="Pumba" id="Q9ERH4"/>
<dbReference type="DNASU" id="108907"/>
<dbReference type="Ensembl" id="ENSMUST00000028771.8">
    <molecule id="Q9ERH4-2"/>
    <property type="protein sequence ID" value="ENSMUSP00000028771.8"/>
    <property type="gene ID" value="ENSMUSG00000027306.16"/>
</dbReference>
<dbReference type="Ensembl" id="ENSMUST00000068225.15">
    <molecule id="Q9ERH4-1"/>
    <property type="protein sequence ID" value="ENSMUSP00000068713.9"/>
    <property type="gene ID" value="ENSMUSG00000027306.16"/>
</dbReference>
<dbReference type="GeneID" id="108907"/>
<dbReference type="KEGG" id="mmu:108907"/>
<dbReference type="UCSC" id="uc008lua.1">
    <molecule id="Q9ERH4-1"/>
    <property type="organism name" value="mouse"/>
</dbReference>
<dbReference type="UCSC" id="uc008lub.1">
    <molecule id="Q9ERH4-2"/>
    <property type="organism name" value="mouse"/>
</dbReference>
<dbReference type="AGR" id="MGI:2675669"/>
<dbReference type="CTD" id="51203"/>
<dbReference type="MGI" id="MGI:2675669">
    <property type="gene designation" value="Nusap1"/>
</dbReference>
<dbReference type="VEuPathDB" id="HostDB:ENSMUSG00000027306"/>
<dbReference type="eggNOG" id="ENOG502QVI7">
    <property type="taxonomic scope" value="Eukaryota"/>
</dbReference>
<dbReference type="GeneTree" id="ENSGT00390000006370"/>
<dbReference type="HOGENOM" id="CLU_050701_0_0_1"/>
<dbReference type="InParanoid" id="Q9ERH4"/>
<dbReference type="OMA" id="PHVTMSG"/>
<dbReference type="OrthoDB" id="3258416at2759"/>
<dbReference type="PhylomeDB" id="Q9ERH4"/>
<dbReference type="TreeFam" id="TF329459"/>
<dbReference type="BioGRID-ORCS" id="108907">
    <property type="hits" value="1 hit in 78 CRISPR screens"/>
</dbReference>
<dbReference type="ChiTaRS" id="Nusap1">
    <property type="organism name" value="mouse"/>
</dbReference>
<dbReference type="PRO" id="PR:Q9ERH4"/>
<dbReference type="Proteomes" id="UP000000589">
    <property type="component" value="Chromosome 2"/>
</dbReference>
<dbReference type="RNAct" id="Q9ERH4">
    <property type="molecule type" value="protein"/>
</dbReference>
<dbReference type="Bgee" id="ENSMUSG00000027306">
    <property type="expression patterns" value="Expressed in undifferentiated genital tubercle and 189 other cell types or tissues"/>
</dbReference>
<dbReference type="GO" id="GO:0005694">
    <property type="term" value="C:chromosome"/>
    <property type="evidence" value="ECO:0007669"/>
    <property type="project" value="UniProtKB-SubCell"/>
</dbReference>
<dbReference type="GO" id="GO:0005737">
    <property type="term" value="C:cytoplasm"/>
    <property type="evidence" value="ECO:0007669"/>
    <property type="project" value="UniProtKB-SubCell"/>
</dbReference>
<dbReference type="GO" id="GO:0005874">
    <property type="term" value="C:microtubule"/>
    <property type="evidence" value="ECO:0007669"/>
    <property type="project" value="UniProtKB-KW"/>
</dbReference>
<dbReference type="GO" id="GO:0072686">
    <property type="term" value="C:mitotic spindle"/>
    <property type="evidence" value="ECO:0000314"/>
    <property type="project" value="MGI"/>
</dbReference>
<dbReference type="GO" id="GO:0005730">
    <property type="term" value="C:nucleolus"/>
    <property type="evidence" value="ECO:0000314"/>
    <property type="project" value="MGI"/>
</dbReference>
<dbReference type="GO" id="GO:0003677">
    <property type="term" value="F:DNA binding"/>
    <property type="evidence" value="ECO:0007669"/>
    <property type="project" value="UniProtKB-KW"/>
</dbReference>
<dbReference type="GO" id="GO:0008017">
    <property type="term" value="F:microtubule binding"/>
    <property type="evidence" value="ECO:0000314"/>
    <property type="project" value="MGI"/>
</dbReference>
<dbReference type="GO" id="GO:0040001">
    <property type="term" value="P:establishment of mitotic spindle localization"/>
    <property type="evidence" value="ECO:0000266"/>
    <property type="project" value="MGI"/>
</dbReference>
<dbReference type="GO" id="GO:0007076">
    <property type="term" value="P:mitotic chromosome condensation"/>
    <property type="evidence" value="ECO:0000266"/>
    <property type="project" value="MGI"/>
</dbReference>
<dbReference type="GO" id="GO:0000281">
    <property type="term" value="P:mitotic cytokinesis"/>
    <property type="evidence" value="ECO:0000266"/>
    <property type="project" value="MGI"/>
</dbReference>
<dbReference type="GO" id="GO:0000070">
    <property type="term" value="P:mitotic sister chromatid segregation"/>
    <property type="evidence" value="ECO:0000266"/>
    <property type="project" value="MGI"/>
</dbReference>
<dbReference type="GO" id="GO:0045840">
    <property type="term" value="P:positive regulation of mitotic nuclear division"/>
    <property type="evidence" value="ECO:0000266"/>
    <property type="project" value="MGI"/>
</dbReference>
<dbReference type="InterPro" id="IPR026756">
    <property type="entry name" value="NuSAP"/>
</dbReference>
<dbReference type="PANTHER" id="PTHR15874">
    <property type="entry name" value="NUCLEOLAR AND SPINDLE-ASSOCIATED PROTEIN 1"/>
    <property type="match status" value="1"/>
</dbReference>
<dbReference type="PANTHER" id="PTHR15874:SF1">
    <property type="entry name" value="NUCLEOLAR AND SPINDLE-ASSOCIATED PROTEIN 1"/>
    <property type="match status" value="1"/>
</dbReference>
<dbReference type="Pfam" id="PF16006">
    <property type="entry name" value="NUSAP"/>
    <property type="match status" value="1"/>
</dbReference>